<organism>
    <name type="scientific">Mesorhizobium japonicum (strain LMG 29417 / CECT 9101 / MAFF 303099)</name>
    <name type="common">Mesorhizobium loti (strain MAFF 303099)</name>
    <dbReference type="NCBI Taxonomy" id="266835"/>
    <lineage>
        <taxon>Bacteria</taxon>
        <taxon>Pseudomonadati</taxon>
        <taxon>Pseudomonadota</taxon>
        <taxon>Alphaproteobacteria</taxon>
        <taxon>Hyphomicrobiales</taxon>
        <taxon>Phyllobacteriaceae</taxon>
        <taxon>Mesorhizobium</taxon>
    </lineage>
</organism>
<evidence type="ECO:0000255" key="1">
    <source>
        <dbReference type="HAMAP-Rule" id="MF_00711"/>
    </source>
</evidence>
<keyword id="KW-0560">Oxidoreductase</keyword>
<keyword id="KW-0663">Pyridoxal phosphate</keyword>
<reference key="1">
    <citation type="journal article" date="2000" name="DNA Res.">
        <title>Complete genome structure of the nitrogen-fixing symbiotic bacterium Mesorhizobium loti.</title>
        <authorList>
            <person name="Kaneko T."/>
            <person name="Nakamura Y."/>
            <person name="Sato S."/>
            <person name="Asamizu E."/>
            <person name="Kato T."/>
            <person name="Sasamoto S."/>
            <person name="Watanabe A."/>
            <person name="Idesawa K."/>
            <person name="Ishikawa A."/>
            <person name="Kawashima K."/>
            <person name="Kimura T."/>
            <person name="Kishida Y."/>
            <person name="Kiyokawa C."/>
            <person name="Kohara M."/>
            <person name="Matsumoto M."/>
            <person name="Matsuno A."/>
            <person name="Mochizuki Y."/>
            <person name="Nakayama S."/>
            <person name="Nakazaki N."/>
            <person name="Shimpo S."/>
            <person name="Sugimoto M."/>
            <person name="Takeuchi C."/>
            <person name="Yamada M."/>
            <person name="Tabata S."/>
        </authorList>
    </citation>
    <scope>NUCLEOTIDE SEQUENCE [LARGE SCALE GENOMIC DNA]</scope>
    <source>
        <strain>LMG 29417 / CECT 9101 / MAFF 303099</strain>
    </source>
</reference>
<accession>Q98LT6</accession>
<sequence length="937" mass="99386">MMTTALTPFSARHIGPGVNDVRAMLAVIGVPSVETLISQAVPQSIRLDLPLTLPAPASEAEALAELSAIMAKNTVLKSFIGAGYHGVHVPPVIQRNLFENPAWYTAYTPYQAEISQGRLEMLFNFQTLVTELTGLPVASASLLDEATAVAEAVGIALRHHRDKRTKVAFAGTPHPQTLDVVRTRAEPLGIEIDGETIDDNTAALLVSWPDTLGVYGDHKAAIDKARAAGALVVFIADPLGLTLTDAPAKLGADIAVGPMQRFGVPMGFGGPHAAYCAVSDRLTRLMPGRLVGQSTDSKGRPGYRLALQTREQHIRRDKATSNICTAQALLANMATAYAIWHGPAGLQAIAGRIHALANRLASGLKAAGVSVLGASRFDTVTVEAKGKAAEIAEAAEKTGRLLRVLDADHVGIAFDETSTDADLDAIASLFGAKAAPSADSTVPGKPRGKEFLTQPVFNENKSETDMMRLLRRLADKDLALDRSMIPLGSCTMKLNAAAEMMPVSWPSIADLHPFAPASHSAGYRAMIGELEGWLSEITGFDAVSLQPNAGSQGEYAGLLAIRAYHRSRGEGHRTVCLIPSSAHGTNPASAAMAGMSVVVVRCLEDGNIDMDDMRAKANEHSKNLAALMFTYPSTHGVYEEGARHLCALIHEHGGQVYFDGANLNALVALARPADIGADVCHMNLHKTFCIPHGGGGPGVGPIGVKAHLKPYLPGHVTEGSAHAVSAAPFGSASILPITWMYIRMMGAAGLKQATETAIISANYVATRLAPHFPLLYKGRHDRIAHECILDTRVLKESAGISVDDIAKRLIDYGFHAPTMSFPVAGTLMVEPTESEPKRELDRFCEAMIAIAGEAAKVARGDWPLADNPLVNAPHTAAETLAGQWTHPYSRLEAAYPAGDADTAAKYWPPVSRIDNVAGDRNLVCSCPPLSDYLGAAE</sequence>
<protein>
    <recommendedName>
        <fullName evidence="1">Glycine dehydrogenase (decarboxylating)</fullName>
        <ecNumber evidence="1">1.4.4.2</ecNumber>
    </recommendedName>
    <alternativeName>
        <fullName evidence="1">Glycine cleavage system P-protein</fullName>
    </alternativeName>
    <alternativeName>
        <fullName evidence="1">Glycine decarboxylase</fullName>
    </alternativeName>
    <alternativeName>
        <fullName evidence="1">Glycine dehydrogenase (aminomethyl-transferring)</fullName>
    </alternativeName>
</protein>
<dbReference type="EC" id="1.4.4.2" evidence="1"/>
<dbReference type="EMBL" id="BA000012">
    <property type="protein sequence ID" value="BAB48377.1"/>
    <property type="molecule type" value="Genomic_DNA"/>
</dbReference>
<dbReference type="RefSeq" id="WP_010909731.1">
    <property type="nucleotide sequence ID" value="NC_002678.2"/>
</dbReference>
<dbReference type="SMR" id="Q98LT6"/>
<dbReference type="KEGG" id="mlo:mlr0885"/>
<dbReference type="PATRIC" id="fig|266835.9.peg.704"/>
<dbReference type="eggNOG" id="COG0403">
    <property type="taxonomic scope" value="Bacteria"/>
</dbReference>
<dbReference type="eggNOG" id="COG1003">
    <property type="taxonomic scope" value="Bacteria"/>
</dbReference>
<dbReference type="HOGENOM" id="CLU_004620_3_2_5"/>
<dbReference type="Proteomes" id="UP000000552">
    <property type="component" value="Chromosome"/>
</dbReference>
<dbReference type="GO" id="GO:0005829">
    <property type="term" value="C:cytosol"/>
    <property type="evidence" value="ECO:0007669"/>
    <property type="project" value="TreeGrafter"/>
</dbReference>
<dbReference type="GO" id="GO:0005960">
    <property type="term" value="C:glycine cleavage complex"/>
    <property type="evidence" value="ECO:0007669"/>
    <property type="project" value="TreeGrafter"/>
</dbReference>
<dbReference type="GO" id="GO:0016594">
    <property type="term" value="F:glycine binding"/>
    <property type="evidence" value="ECO:0007669"/>
    <property type="project" value="TreeGrafter"/>
</dbReference>
<dbReference type="GO" id="GO:0004375">
    <property type="term" value="F:glycine dehydrogenase (decarboxylating) activity"/>
    <property type="evidence" value="ECO:0007669"/>
    <property type="project" value="UniProtKB-EC"/>
</dbReference>
<dbReference type="GO" id="GO:0030170">
    <property type="term" value="F:pyridoxal phosphate binding"/>
    <property type="evidence" value="ECO:0007669"/>
    <property type="project" value="TreeGrafter"/>
</dbReference>
<dbReference type="GO" id="GO:0019464">
    <property type="term" value="P:glycine decarboxylation via glycine cleavage system"/>
    <property type="evidence" value="ECO:0007669"/>
    <property type="project" value="UniProtKB-UniRule"/>
</dbReference>
<dbReference type="CDD" id="cd00613">
    <property type="entry name" value="GDC-P"/>
    <property type="match status" value="2"/>
</dbReference>
<dbReference type="FunFam" id="3.40.640.10:FF:000007">
    <property type="entry name" value="glycine dehydrogenase (Decarboxylating), mitochondrial"/>
    <property type="match status" value="1"/>
</dbReference>
<dbReference type="Gene3D" id="3.90.1150.10">
    <property type="entry name" value="Aspartate Aminotransferase, domain 1"/>
    <property type="match status" value="2"/>
</dbReference>
<dbReference type="Gene3D" id="3.40.640.10">
    <property type="entry name" value="Type I PLP-dependent aspartate aminotransferase-like (Major domain)"/>
    <property type="match status" value="2"/>
</dbReference>
<dbReference type="HAMAP" id="MF_00711">
    <property type="entry name" value="GcvP"/>
    <property type="match status" value="1"/>
</dbReference>
<dbReference type="InterPro" id="IPR003437">
    <property type="entry name" value="GcvP"/>
</dbReference>
<dbReference type="InterPro" id="IPR049316">
    <property type="entry name" value="GDC-P_C"/>
</dbReference>
<dbReference type="InterPro" id="IPR049315">
    <property type="entry name" value="GDC-P_N"/>
</dbReference>
<dbReference type="InterPro" id="IPR020581">
    <property type="entry name" value="GDC_P"/>
</dbReference>
<dbReference type="InterPro" id="IPR015424">
    <property type="entry name" value="PyrdxlP-dep_Trfase"/>
</dbReference>
<dbReference type="InterPro" id="IPR015421">
    <property type="entry name" value="PyrdxlP-dep_Trfase_major"/>
</dbReference>
<dbReference type="InterPro" id="IPR015422">
    <property type="entry name" value="PyrdxlP-dep_Trfase_small"/>
</dbReference>
<dbReference type="NCBIfam" id="TIGR00461">
    <property type="entry name" value="gcvP"/>
    <property type="match status" value="1"/>
</dbReference>
<dbReference type="NCBIfam" id="NF003346">
    <property type="entry name" value="PRK04366.1"/>
    <property type="match status" value="1"/>
</dbReference>
<dbReference type="PANTHER" id="PTHR11773:SF1">
    <property type="entry name" value="GLYCINE DEHYDROGENASE (DECARBOXYLATING), MITOCHONDRIAL"/>
    <property type="match status" value="1"/>
</dbReference>
<dbReference type="PANTHER" id="PTHR11773">
    <property type="entry name" value="GLYCINE DEHYDROGENASE, DECARBOXYLATING"/>
    <property type="match status" value="1"/>
</dbReference>
<dbReference type="Pfam" id="PF21478">
    <property type="entry name" value="GcvP2_C"/>
    <property type="match status" value="1"/>
</dbReference>
<dbReference type="Pfam" id="PF02347">
    <property type="entry name" value="GDC-P"/>
    <property type="match status" value="2"/>
</dbReference>
<dbReference type="SUPFAM" id="SSF53383">
    <property type="entry name" value="PLP-dependent transferases"/>
    <property type="match status" value="2"/>
</dbReference>
<feature type="chain" id="PRO_0000166931" description="Glycine dehydrogenase (decarboxylating)">
    <location>
        <begin position="1"/>
        <end position="937"/>
    </location>
</feature>
<feature type="modified residue" description="N6-(pyridoxal phosphate)lysine" evidence="1">
    <location>
        <position position="686"/>
    </location>
</feature>
<gene>
    <name evidence="1" type="primary">gcvP</name>
    <name type="ordered locus">mlr0885</name>
</gene>
<name>GCSP_RHILO</name>
<proteinExistence type="inferred from homology"/>
<comment type="function">
    <text evidence="1">The glycine cleavage system catalyzes the degradation of glycine. The P protein binds the alpha-amino group of glycine through its pyridoxal phosphate cofactor; CO(2) is released and the remaining methylamine moiety is then transferred to the lipoamide cofactor of the H protein.</text>
</comment>
<comment type="catalytic activity">
    <reaction evidence="1">
        <text>N(6)-[(R)-lipoyl]-L-lysyl-[glycine-cleavage complex H protein] + glycine + H(+) = N(6)-[(R)-S(8)-aminomethyldihydrolipoyl]-L-lysyl-[glycine-cleavage complex H protein] + CO2</text>
        <dbReference type="Rhea" id="RHEA:24304"/>
        <dbReference type="Rhea" id="RHEA-COMP:10494"/>
        <dbReference type="Rhea" id="RHEA-COMP:10495"/>
        <dbReference type="ChEBI" id="CHEBI:15378"/>
        <dbReference type="ChEBI" id="CHEBI:16526"/>
        <dbReference type="ChEBI" id="CHEBI:57305"/>
        <dbReference type="ChEBI" id="CHEBI:83099"/>
        <dbReference type="ChEBI" id="CHEBI:83143"/>
        <dbReference type="EC" id="1.4.4.2"/>
    </reaction>
</comment>
<comment type="cofactor">
    <cofactor evidence="1">
        <name>pyridoxal 5'-phosphate</name>
        <dbReference type="ChEBI" id="CHEBI:597326"/>
    </cofactor>
</comment>
<comment type="subunit">
    <text evidence="1">The glycine cleavage system is composed of four proteins: P, T, L and H.</text>
</comment>
<comment type="similarity">
    <text evidence="1">Belongs to the GcvP family.</text>
</comment>